<comment type="function">
    <text evidence="1">DEAD-box RNA helicase involved in RNA degradation. Has RNA-dependent ATPase activity and unwinds double-stranded RNA.</text>
</comment>
<comment type="catalytic activity">
    <reaction evidence="1">
        <text>ATP + H2O = ADP + phosphate + H(+)</text>
        <dbReference type="Rhea" id="RHEA:13065"/>
        <dbReference type="ChEBI" id="CHEBI:15377"/>
        <dbReference type="ChEBI" id="CHEBI:15378"/>
        <dbReference type="ChEBI" id="CHEBI:30616"/>
        <dbReference type="ChEBI" id="CHEBI:43474"/>
        <dbReference type="ChEBI" id="CHEBI:456216"/>
        <dbReference type="EC" id="3.6.4.13"/>
    </reaction>
</comment>
<comment type="subunit">
    <text evidence="1">Component of the RNA degradosome, which is a multiprotein complex involved in RNA processing and mRNA degradation.</text>
</comment>
<comment type="subcellular location">
    <subcellularLocation>
        <location evidence="1">Cytoplasm</location>
    </subcellularLocation>
</comment>
<comment type="similarity">
    <text evidence="1">Belongs to the DEAD box helicase family. RhlB subfamily.</text>
</comment>
<sequence>MSKTHLTEQKFSDFALHPKVVEALEKKGFHNCTPIQALALPLTLAGRDVAGQAQTGTGKTMAFLTSTFHYLLSHPAIADRKVNQPRALIMAPTRELAVQIHADAEPLAEATGLKLGLAYGGDGYDKQLKVLESGVDILIGTTGRLIDYAKQNHINLGAIQVVVLDEADRMYDLGFIKDIRWLFRRMPPANQRLNMLFSATLSYRVRELAFEQMNNAEYIEVEPEQKTGHRIKEELFYPSNEEKMRLLQTLIEEEWPDRAIIFANTKHRCEEIWGHLAADGHRVGLLTGDVAQKKRLRILDEFTRGDLDILVATDVAARGLHIPAVTHVFNYDLPDDCEDYVHRIGRTGRAGASGHSISLACEEYALNLPAIETYIGHSIPVSKYNPDALMTDLPKPLRLTRPRTGNGPRRTGAPRNRRRSG</sequence>
<dbReference type="EC" id="3.6.4.13" evidence="1"/>
<dbReference type="EMBL" id="FM180568">
    <property type="protein sequence ID" value="CAS11628.1"/>
    <property type="molecule type" value="Genomic_DNA"/>
</dbReference>
<dbReference type="RefSeq" id="WP_000047499.1">
    <property type="nucleotide sequence ID" value="NC_011601.1"/>
</dbReference>
<dbReference type="SMR" id="B7UMN5"/>
<dbReference type="GeneID" id="93778164"/>
<dbReference type="KEGG" id="ecg:E2348C_4080"/>
<dbReference type="HOGENOM" id="CLU_003041_1_3_6"/>
<dbReference type="Proteomes" id="UP000008205">
    <property type="component" value="Chromosome"/>
</dbReference>
<dbReference type="GO" id="GO:0005829">
    <property type="term" value="C:cytosol"/>
    <property type="evidence" value="ECO:0007669"/>
    <property type="project" value="TreeGrafter"/>
</dbReference>
<dbReference type="GO" id="GO:0005524">
    <property type="term" value="F:ATP binding"/>
    <property type="evidence" value="ECO:0007669"/>
    <property type="project" value="UniProtKB-UniRule"/>
</dbReference>
<dbReference type="GO" id="GO:0016887">
    <property type="term" value="F:ATP hydrolysis activity"/>
    <property type="evidence" value="ECO:0007669"/>
    <property type="project" value="RHEA"/>
</dbReference>
<dbReference type="GO" id="GO:0003723">
    <property type="term" value="F:RNA binding"/>
    <property type="evidence" value="ECO:0007669"/>
    <property type="project" value="UniProtKB-UniRule"/>
</dbReference>
<dbReference type="GO" id="GO:0003724">
    <property type="term" value="F:RNA helicase activity"/>
    <property type="evidence" value="ECO:0007669"/>
    <property type="project" value="UniProtKB-UniRule"/>
</dbReference>
<dbReference type="GO" id="GO:0006401">
    <property type="term" value="P:RNA catabolic process"/>
    <property type="evidence" value="ECO:0007669"/>
    <property type="project" value="UniProtKB-UniRule"/>
</dbReference>
<dbReference type="CDD" id="cd00268">
    <property type="entry name" value="DEADc"/>
    <property type="match status" value="1"/>
</dbReference>
<dbReference type="CDD" id="cd18787">
    <property type="entry name" value="SF2_C_DEAD"/>
    <property type="match status" value="1"/>
</dbReference>
<dbReference type="FunFam" id="3.40.50.300:FF:000008">
    <property type="entry name" value="ATP-dependent RNA helicase RhlB"/>
    <property type="match status" value="1"/>
</dbReference>
<dbReference type="FunFam" id="3.40.50.300:FF:000312">
    <property type="entry name" value="ATP-dependent RNA helicase RhlB"/>
    <property type="match status" value="1"/>
</dbReference>
<dbReference type="Gene3D" id="3.40.50.300">
    <property type="entry name" value="P-loop containing nucleotide triphosphate hydrolases"/>
    <property type="match status" value="2"/>
</dbReference>
<dbReference type="HAMAP" id="MF_00661">
    <property type="entry name" value="DEAD_helicase_RhlB"/>
    <property type="match status" value="1"/>
</dbReference>
<dbReference type="InterPro" id="IPR011545">
    <property type="entry name" value="DEAD/DEAH_box_helicase_dom"/>
</dbReference>
<dbReference type="InterPro" id="IPR050079">
    <property type="entry name" value="DEAD_box_RNA_helicase"/>
</dbReference>
<dbReference type="InterPro" id="IPR014001">
    <property type="entry name" value="Helicase_ATP-bd"/>
</dbReference>
<dbReference type="InterPro" id="IPR001650">
    <property type="entry name" value="Helicase_C-like"/>
</dbReference>
<dbReference type="InterPro" id="IPR027417">
    <property type="entry name" value="P-loop_NTPase"/>
</dbReference>
<dbReference type="InterPro" id="IPR000629">
    <property type="entry name" value="RNA-helicase_DEAD-box_CS"/>
</dbReference>
<dbReference type="InterPro" id="IPR023554">
    <property type="entry name" value="RNA_helicase_ATP-dep_RhlB"/>
</dbReference>
<dbReference type="InterPro" id="IPR014014">
    <property type="entry name" value="RNA_helicase_DEAD_Q_motif"/>
</dbReference>
<dbReference type="NCBIfam" id="NF003419">
    <property type="entry name" value="PRK04837.1"/>
    <property type="match status" value="1"/>
</dbReference>
<dbReference type="PANTHER" id="PTHR47959:SF10">
    <property type="entry name" value="ATP-DEPENDENT RNA HELICASE RHLB"/>
    <property type="match status" value="1"/>
</dbReference>
<dbReference type="PANTHER" id="PTHR47959">
    <property type="entry name" value="ATP-DEPENDENT RNA HELICASE RHLE-RELATED"/>
    <property type="match status" value="1"/>
</dbReference>
<dbReference type="Pfam" id="PF00270">
    <property type="entry name" value="DEAD"/>
    <property type="match status" value="1"/>
</dbReference>
<dbReference type="Pfam" id="PF00271">
    <property type="entry name" value="Helicase_C"/>
    <property type="match status" value="1"/>
</dbReference>
<dbReference type="SMART" id="SM00487">
    <property type="entry name" value="DEXDc"/>
    <property type="match status" value="1"/>
</dbReference>
<dbReference type="SMART" id="SM00490">
    <property type="entry name" value="HELICc"/>
    <property type="match status" value="1"/>
</dbReference>
<dbReference type="SUPFAM" id="SSF52540">
    <property type="entry name" value="P-loop containing nucleoside triphosphate hydrolases"/>
    <property type="match status" value="1"/>
</dbReference>
<dbReference type="PROSITE" id="PS00039">
    <property type="entry name" value="DEAD_ATP_HELICASE"/>
    <property type="match status" value="1"/>
</dbReference>
<dbReference type="PROSITE" id="PS51192">
    <property type="entry name" value="HELICASE_ATP_BIND_1"/>
    <property type="match status" value="1"/>
</dbReference>
<dbReference type="PROSITE" id="PS51194">
    <property type="entry name" value="HELICASE_CTER"/>
    <property type="match status" value="1"/>
</dbReference>
<dbReference type="PROSITE" id="PS51195">
    <property type="entry name" value="Q_MOTIF"/>
    <property type="match status" value="1"/>
</dbReference>
<organism>
    <name type="scientific">Escherichia coli O127:H6 (strain E2348/69 / EPEC)</name>
    <dbReference type="NCBI Taxonomy" id="574521"/>
    <lineage>
        <taxon>Bacteria</taxon>
        <taxon>Pseudomonadati</taxon>
        <taxon>Pseudomonadota</taxon>
        <taxon>Gammaproteobacteria</taxon>
        <taxon>Enterobacterales</taxon>
        <taxon>Enterobacteriaceae</taxon>
        <taxon>Escherichia</taxon>
    </lineage>
</organism>
<gene>
    <name evidence="1" type="primary">rhlB</name>
    <name type="ordered locus">E2348C_4080</name>
</gene>
<evidence type="ECO:0000255" key="1">
    <source>
        <dbReference type="HAMAP-Rule" id="MF_00661"/>
    </source>
</evidence>
<evidence type="ECO:0000256" key="2">
    <source>
        <dbReference type="SAM" id="MobiDB-lite"/>
    </source>
</evidence>
<keyword id="KW-0067">ATP-binding</keyword>
<keyword id="KW-0963">Cytoplasm</keyword>
<keyword id="KW-0347">Helicase</keyword>
<keyword id="KW-0378">Hydrolase</keyword>
<keyword id="KW-0547">Nucleotide-binding</keyword>
<keyword id="KW-1185">Reference proteome</keyword>
<keyword id="KW-0694">RNA-binding</keyword>
<reference key="1">
    <citation type="journal article" date="2009" name="J. Bacteriol.">
        <title>Complete genome sequence and comparative genome analysis of enteropathogenic Escherichia coli O127:H6 strain E2348/69.</title>
        <authorList>
            <person name="Iguchi A."/>
            <person name="Thomson N.R."/>
            <person name="Ogura Y."/>
            <person name="Saunders D."/>
            <person name="Ooka T."/>
            <person name="Henderson I.R."/>
            <person name="Harris D."/>
            <person name="Asadulghani M."/>
            <person name="Kurokawa K."/>
            <person name="Dean P."/>
            <person name="Kenny B."/>
            <person name="Quail M.A."/>
            <person name="Thurston S."/>
            <person name="Dougan G."/>
            <person name="Hayashi T."/>
            <person name="Parkhill J."/>
            <person name="Frankel G."/>
        </authorList>
    </citation>
    <scope>NUCLEOTIDE SEQUENCE [LARGE SCALE GENOMIC DNA]</scope>
    <source>
        <strain>E2348/69 / EPEC</strain>
    </source>
</reference>
<proteinExistence type="inferred from homology"/>
<protein>
    <recommendedName>
        <fullName evidence="1">ATP-dependent RNA helicase RhlB</fullName>
        <ecNumber evidence="1">3.6.4.13</ecNumber>
    </recommendedName>
</protein>
<accession>B7UMN5</accession>
<name>RHLB_ECO27</name>
<feature type="chain" id="PRO_1000147580" description="ATP-dependent RNA helicase RhlB">
    <location>
        <begin position="1"/>
        <end position="421"/>
    </location>
</feature>
<feature type="domain" description="Helicase ATP-binding" evidence="1">
    <location>
        <begin position="40"/>
        <end position="219"/>
    </location>
</feature>
<feature type="domain" description="Helicase C-terminal" evidence="1">
    <location>
        <begin position="245"/>
        <end position="390"/>
    </location>
</feature>
<feature type="region of interest" description="Disordered" evidence="2">
    <location>
        <begin position="392"/>
        <end position="421"/>
    </location>
</feature>
<feature type="short sequence motif" description="Q motif">
    <location>
        <begin position="9"/>
        <end position="37"/>
    </location>
</feature>
<feature type="short sequence motif" description="DEAD box">
    <location>
        <begin position="165"/>
        <end position="168"/>
    </location>
</feature>
<feature type="compositionally biased region" description="Low complexity" evidence="2">
    <location>
        <begin position="402"/>
        <end position="414"/>
    </location>
</feature>
<feature type="binding site" evidence="1">
    <location>
        <begin position="53"/>
        <end position="60"/>
    </location>
    <ligand>
        <name>ATP</name>
        <dbReference type="ChEBI" id="CHEBI:30616"/>
    </ligand>
</feature>